<protein>
    <recommendedName>
        <fullName evidence="1">Deoxyribose-phosphate aldolase</fullName>
        <shortName evidence="1">DERA</shortName>
        <ecNumber evidence="1">4.1.2.4</ecNumber>
    </recommendedName>
    <alternativeName>
        <fullName evidence="1">2-deoxy-D-ribose 5-phosphate aldolase</fullName>
    </alternativeName>
    <alternativeName>
        <fullName evidence="1">Phosphodeoxyriboaldolase</fullName>
        <shortName evidence="1">Deoxyriboaldolase</shortName>
    </alternativeName>
</protein>
<dbReference type="EC" id="4.1.2.4" evidence="1"/>
<dbReference type="EMBL" id="CP000436">
    <property type="protein sequence ID" value="ABI25023.1"/>
    <property type="molecule type" value="Genomic_DNA"/>
</dbReference>
<dbReference type="SMR" id="Q0I2N7"/>
<dbReference type="KEGG" id="hso:HS_0748"/>
<dbReference type="eggNOG" id="COG0274">
    <property type="taxonomic scope" value="Bacteria"/>
</dbReference>
<dbReference type="HOGENOM" id="CLU_053595_0_1_6"/>
<dbReference type="UniPathway" id="UPA00002">
    <property type="reaction ID" value="UER00468"/>
</dbReference>
<dbReference type="GO" id="GO:0005737">
    <property type="term" value="C:cytoplasm"/>
    <property type="evidence" value="ECO:0007669"/>
    <property type="project" value="UniProtKB-SubCell"/>
</dbReference>
<dbReference type="GO" id="GO:0004139">
    <property type="term" value="F:deoxyribose-phosphate aldolase activity"/>
    <property type="evidence" value="ECO:0007669"/>
    <property type="project" value="UniProtKB-UniRule"/>
</dbReference>
<dbReference type="GO" id="GO:0006018">
    <property type="term" value="P:2-deoxyribose 1-phosphate catabolic process"/>
    <property type="evidence" value="ECO:0007669"/>
    <property type="project" value="UniProtKB-UniRule"/>
</dbReference>
<dbReference type="GO" id="GO:0016052">
    <property type="term" value="P:carbohydrate catabolic process"/>
    <property type="evidence" value="ECO:0007669"/>
    <property type="project" value="TreeGrafter"/>
</dbReference>
<dbReference type="GO" id="GO:0009264">
    <property type="term" value="P:deoxyribonucleotide catabolic process"/>
    <property type="evidence" value="ECO:0007669"/>
    <property type="project" value="InterPro"/>
</dbReference>
<dbReference type="CDD" id="cd00959">
    <property type="entry name" value="DeoC"/>
    <property type="match status" value="1"/>
</dbReference>
<dbReference type="FunFam" id="3.20.20.70:FF:000044">
    <property type="entry name" value="Deoxyribose-phosphate aldolase"/>
    <property type="match status" value="1"/>
</dbReference>
<dbReference type="Gene3D" id="3.20.20.70">
    <property type="entry name" value="Aldolase class I"/>
    <property type="match status" value="1"/>
</dbReference>
<dbReference type="HAMAP" id="MF_00114">
    <property type="entry name" value="DeoC_type1"/>
    <property type="match status" value="1"/>
</dbReference>
<dbReference type="InterPro" id="IPR013785">
    <property type="entry name" value="Aldolase_TIM"/>
</dbReference>
<dbReference type="InterPro" id="IPR011343">
    <property type="entry name" value="DeoC"/>
</dbReference>
<dbReference type="InterPro" id="IPR002915">
    <property type="entry name" value="DeoC/FbaB/LacD_aldolase"/>
</dbReference>
<dbReference type="InterPro" id="IPR028581">
    <property type="entry name" value="DeoC_typeI"/>
</dbReference>
<dbReference type="NCBIfam" id="TIGR00126">
    <property type="entry name" value="deoC"/>
    <property type="match status" value="1"/>
</dbReference>
<dbReference type="PANTHER" id="PTHR10889">
    <property type="entry name" value="DEOXYRIBOSE-PHOSPHATE ALDOLASE"/>
    <property type="match status" value="1"/>
</dbReference>
<dbReference type="PANTHER" id="PTHR10889:SF1">
    <property type="entry name" value="DEOXYRIBOSE-PHOSPHATE ALDOLASE"/>
    <property type="match status" value="1"/>
</dbReference>
<dbReference type="Pfam" id="PF01791">
    <property type="entry name" value="DeoC"/>
    <property type="match status" value="1"/>
</dbReference>
<dbReference type="PIRSF" id="PIRSF001357">
    <property type="entry name" value="DeoC"/>
    <property type="match status" value="1"/>
</dbReference>
<dbReference type="SMART" id="SM01133">
    <property type="entry name" value="DeoC"/>
    <property type="match status" value="1"/>
</dbReference>
<dbReference type="SUPFAM" id="SSF51569">
    <property type="entry name" value="Aldolase"/>
    <property type="match status" value="1"/>
</dbReference>
<comment type="function">
    <text evidence="1">Catalyzes a reversible aldol reaction between acetaldehyde and D-glyceraldehyde 3-phosphate to generate 2-deoxy-D-ribose 5-phosphate.</text>
</comment>
<comment type="catalytic activity">
    <reaction evidence="1">
        <text>2-deoxy-D-ribose 5-phosphate = D-glyceraldehyde 3-phosphate + acetaldehyde</text>
        <dbReference type="Rhea" id="RHEA:12821"/>
        <dbReference type="ChEBI" id="CHEBI:15343"/>
        <dbReference type="ChEBI" id="CHEBI:59776"/>
        <dbReference type="ChEBI" id="CHEBI:62877"/>
        <dbReference type="EC" id="4.1.2.4"/>
    </reaction>
</comment>
<comment type="pathway">
    <text evidence="1">Carbohydrate degradation; 2-deoxy-D-ribose 1-phosphate degradation; D-glyceraldehyde 3-phosphate and acetaldehyde from 2-deoxy-alpha-D-ribose 1-phosphate: step 2/2.</text>
</comment>
<comment type="subcellular location">
    <subcellularLocation>
        <location evidence="1">Cytoplasm</location>
    </subcellularLocation>
</comment>
<comment type="similarity">
    <text evidence="1">Belongs to the DeoC/FbaB aldolase family. DeoC type 1 subfamily.</text>
</comment>
<keyword id="KW-0963">Cytoplasm</keyword>
<keyword id="KW-0456">Lyase</keyword>
<keyword id="KW-0704">Schiff base</keyword>
<proteinExistence type="inferred from homology"/>
<sequence>MQSYDIAQFIDHTALTAEKTEQDILDLCNEAIEHNFFSVCINSGYIPLARQKLQNTNVKICTVVGFPLGANLSTVKAFEAKEAIKAGATEIDMVINIGWIKSNQWESVKADIQAVLAACEGALLKVILETCLLTKEEIITACKICRELGVGFVKTSTGFNKGGATVENIALMRQVVGENIGVKASGGVRDTKTAIEMIKNGATRIGSSSGIAIINGLTDNNAIY</sequence>
<organism>
    <name type="scientific">Histophilus somni (strain 129Pt)</name>
    <name type="common">Haemophilus somnus</name>
    <dbReference type="NCBI Taxonomy" id="205914"/>
    <lineage>
        <taxon>Bacteria</taxon>
        <taxon>Pseudomonadati</taxon>
        <taxon>Pseudomonadota</taxon>
        <taxon>Gammaproteobacteria</taxon>
        <taxon>Pasteurellales</taxon>
        <taxon>Pasteurellaceae</taxon>
        <taxon>Histophilus</taxon>
    </lineage>
</organism>
<gene>
    <name evidence="1" type="primary">deoC</name>
    <name type="ordered locus">HS_0748</name>
</gene>
<reference key="1">
    <citation type="journal article" date="2007" name="J. Bacteriol.">
        <title>Complete genome sequence of Haemophilus somnus (Histophilus somni) strain 129Pt and comparison to Haemophilus ducreyi 35000HP and Haemophilus influenzae Rd.</title>
        <authorList>
            <person name="Challacombe J.F."/>
            <person name="Duncan A.J."/>
            <person name="Brettin T.S."/>
            <person name="Bruce D."/>
            <person name="Chertkov O."/>
            <person name="Detter J.C."/>
            <person name="Han C.S."/>
            <person name="Misra M."/>
            <person name="Richardson P."/>
            <person name="Tapia R."/>
            <person name="Thayer N."/>
            <person name="Xie G."/>
            <person name="Inzana T.J."/>
        </authorList>
    </citation>
    <scope>NUCLEOTIDE SEQUENCE [LARGE SCALE GENOMIC DNA]</scope>
    <source>
        <strain>129Pt</strain>
    </source>
</reference>
<feature type="chain" id="PRO_1000015318" description="Deoxyribose-phosphate aldolase">
    <location>
        <begin position="1"/>
        <end position="224"/>
    </location>
</feature>
<feature type="active site" description="Proton donor/acceptor" evidence="1">
    <location>
        <position position="92"/>
    </location>
</feature>
<feature type="active site" description="Schiff-base intermediate with acetaldehyde" evidence="1">
    <location>
        <position position="154"/>
    </location>
</feature>
<feature type="active site" description="Proton donor/acceptor" evidence="1">
    <location>
        <position position="183"/>
    </location>
</feature>
<accession>Q0I2N7</accession>
<name>DEOC_HISS1</name>
<evidence type="ECO:0000255" key="1">
    <source>
        <dbReference type="HAMAP-Rule" id="MF_00114"/>
    </source>
</evidence>